<reference key="1">
    <citation type="journal article" date="2010" name="J. Bacteriol.">
        <title>Whole genome sequences of two Xylella fastidiosa strains (M12 and M23) causing almond leaf scorch disease in California.</title>
        <authorList>
            <person name="Chen J."/>
            <person name="Xie G."/>
            <person name="Han S."/>
            <person name="Chertkov O."/>
            <person name="Sims D."/>
            <person name="Civerolo E.L."/>
        </authorList>
    </citation>
    <scope>NUCLEOTIDE SEQUENCE [LARGE SCALE GENOMIC DNA]</scope>
    <source>
        <strain>M12</strain>
    </source>
</reference>
<sequence>MTPLIFVTGGVVSSLGKGIAAASLASILEARGLKVTMVKLDPYINVDPGTMSPFQHGEVYVTDDGAETDLDLGHYERFVRTRLSRKNSVTTGRIYQNVICKERRGDYLGATVQVIPHITDEIRRCIDEATASFDVALVEIGGTVGDIESLPFLEAIRQVRIERGAERTMFMHLTLVPYIAAAGELKTKPTQHSVKELRSIGIQPDVLLCRSEQVIPDSERRKIALFTNVSERAVIGCPDIDVLYGMPLELRRQGLDEIVIDQFKLSGTTSLADLSEWEDVVDAIKHPLDEVTIAVVGKYVDYRDAYKSVGEALKHGGLRQRTKVNLKWVEAQDLEGSDMAALKDIDGILVPGGFGDRGFEGKVLASRYAREQRVPYFGICYGMQAAVVDYARHVAGLEGANSTENDRQSSHPVIALITEWRTTTGEVERRDEKSDLGGTMRLGLQEQRLKAGTLARELYGRDVVGERHRHRYEFNNRYRTQLEDAGLVIAAKSMDDTLVEMIELPREMHPWFLACQAHPEFLSTPRDGHPLFIGFVKASRARKAGGKLLREVCV</sequence>
<comment type="function">
    <text evidence="1">Catalyzes the ATP-dependent amination of UTP to CTP with either L-glutamine or ammonia as the source of nitrogen. Regulates intracellular CTP levels through interactions with the four ribonucleotide triphosphates.</text>
</comment>
<comment type="catalytic activity">
    <reaction evidence="1">
        <text>UTP + L-glutamine + ATP + H2O = CTP + L-glutamate + ADP + phosphate + 2 H(+)</text>
        <dbReference type="Rhea" id="RHEA:26426"/>
        <dbReference type="ChEBI" id="CHEBI:15377"/>
        <dbReference type="ChEBI" id="CHEBI:15378"/>
        <dbReference type="ChEBI" id="CHEBI:29985"/>
        <dbReference type="ChEBI" id="CHEBI:30616"/>
        <dbReference type="ChEBI" id="CHEBI:37563"/>
        <dbReference type="ChEBI" id="CHEBI:43474"/>
        <dbReference type="ChEBI" id="CHEBI:46398"/>
        <dbReference type="ChEBI" id="CHEBI:58359"/>
        <dbReference type="ChEBI" id="CHEBI:456216"/>
        <dbReference type="EC" id="6.3.4.2"/>
    </reaction>
</comment>
<comment type="catalytic activity">
    <reaction evidence="1">
        <text>L-glutamine + H2O = L-glutamate + NH4(+)</text>
        <dbReference type="Rhea" id="RHEA:15889"/>
        <dbReference type="ChEBI" id="CHEBI:15377"/>
        <dbReference type="ChEBI" id="CHEBI:28938"/>
        <dbReference type="ChEBI" id="CHEBI:29985"/>
        <dbReference type="ChEBI" id="CHEBI:58359"/>
    </reaction>
</comment>
<comment type="catalytic activity">
    <reaction evidence="1">
        <text>UTP + NH4(+) + ATP = CTP + ADP + phosphate + 2 H(+)</text>
        <dbReference type="Rhea" id="RHEA:16597"/>
        <dbReference type="ChEBI" id="CHEBI:15378"/>
        <dbReference type="ChEBI" id="CHEBI:28938"/>
        <dbReference type="ChEBI" id="CHEBI:30616"/>
        <dbReference type="ChEBI" id="CHEBI:37563"/>
        <dbReference type="ChEBI" id="CHEBI:43474"/>
        <dbReference type="ChEBI" id="CHEBI:46398"/>
        <dbReference type="ChEBI" id="CHEBI:456216"/>
    </reaction>
</comment>
<comment type="activity regulation">
    <text evidence="1">Allosterically activated by GTP, when glutamine is the substrate; GTP has no effect on the reaction when ammonia is the substrate. The allosteric effector GTP functions by stabilizing the protein conformation that binds the tetrahedral intermediate(s) formed during glutamine hydrolysis. Inhibited by the product CTP, via allosteric rather than competitive inhibition.</text>
</comment>
<comment type="pathway">
    <text evidence="1">Pyrimidine metabolism; CTP biosynthesis via de novo pathway; CTP from UDP: step 2/2.</text>
</comment>
<comment type="subunit">
    <text evidence="1">Homotetramer.</text>
</comment>
<comment type="miscellaneous">
    <text evidence="1">CTPSs have evolved a hybrid strategy for distinguishing between UTP and CTP. The overlapping regions of the product feedback inhibitory and substrate sites recognize a common feature in both compounds, the triphosphate moiety. To differentiate isosteric substrate and product pyrimidine rings, an additional pocket far from the expected kinase/ligase catalytic site, specifically recognizes the cytosine and ribose portions of the product inhibitor.</text>
</comment>
<comment type="similarity">
    <text evidence="1">Belongs to the CTP synthase family.</text>
</comment>
<gene>
    <name evidence="1" type="primary">pyrG</name>
    <name type="ordered locus">Xfasm12_0614</name>
</gene>
<organism>
    <name type="scientific">Xylella fastidiosa (strain M12)</name>
    <dbReference type="NCBI Taxonomy" id="405440"/>
    <lineage>
        <taxon>Bacteria</taxon>
        <taxon>Pseudomonadati</taxon>
        <taxon>Pseudomonadota</taxon>
        <taxon>Gammaproteobacteria</taxon>
        <taxon>Lysobacterales</taxon>
        <taxon>Lysobacteraceae</taxon>
        <taxon>Xylella</taxon>
    </lineage>
</organism>
<evidence type="ECO:0000255" key="1">
    <source>
        <dbReference type="HAMAP-Rule" id="MF_01227"/>
    </source>
</evidence>
<protein>
    <recommendedName>
        <fullName evidence="1">CTP synthase</fullName>
        <ecNumber evidence="1">6.3.4.2</ecNumber>
    </recommendedName>
    <alternativeName>
        <fullName evidence="1">Cytidine 5'-triphosphate synthase</fullName>
    </alternativeName>
    <alternativeName>
        <fullName evidence="1">Cytidine triphosphate synthetase</fullName>
        <shortName evidence="1">CTP synthetase</shortName>
        <shortName evidence="1">CTPS</shortName>
    </alternativeName>
    <alternativeName>
        <fullName evidence="1">UTP--ammonia ligase</fullName>
    </alternativeName>
</protein>
<name>PYRG_XYLFM</name>
<feature type="chain" id="PRO_1000139605" description="CTP synthase">
    <location>
        <begin position="1"/>
        <end position="554"/>
    </location>
</feature>
<feature type="domain" description="Glutamine amidotransferase type-1" evidence="1">
    <location>
        <begin position="292"/>
        <end position="545"/>
    </location>
</feature>
<feature type="region of interest" description="Amidoligase domain" evidence="1">
    <location>
        <begin position="1"/>
        <end position="265"/>
    </location>
</feature>
<feature type="active site" description="Nucleophile; for glutamine hydrolysis" evidence="1">
    <location>
        <position position="380"/>
    </location>
</feature>
<feature type="active site" evidence="1">
    <location>
        <position position="518"/>
    </location>
</feature>
<feature type="active site" evidence="1">
    <location>
        <position position="520"/>
    </location>
</feature>
<feature type="binding site" evidence="1">
    <location>
        <position position="13"/>
    </location>
    <ligand>
        <name>CTP</name>
        <dbReference type="ChEBI" id="CHEBI:37563"/>
        <note>allosteric inhibitor</note>
    </ligand>
</feature>
<feature type="binding site" evidence="1">
    <location>
        <position position="13"/>
    </location>
    <ligand>
        <name>UTP</name>
        <dbReference type="ChEBI" id="CHEBI:46398"/>
    </ligand>
</feature>
<feature type="binding site" evidence="1">
    <location>
        <begin position="14"/>
        <end position="19"/>
    </location>
    <ligand>
        <name>ATP</name>
        <dbReference type="ChEBI" id="CHEBI:30616"/>
    </ligand>
</feature>
<feature type="binding site" evidence="1">
    <location>
        <position position="71"/>
    </location>
    <ligand>
        <name>ATP</name>
        <dbReference type="ChEBI" id="CHEBI:30616"/>
    </ligand>
</feature>
<feature type="binding site" evidence="1">
    <location>
        <position position="71"/>
    </location>
    <ligand>
        <name>Mg(2+)</name>
        <dbReference type="ChEBI" id="CHEBI:18420"/>
    </ligand>
</feature>
<feature type="binding site" evidence="1">
    <location>
        <position position="139"/>
    </location>
    <ligand>
        <name>Mg(2+)</name>
        <dbReference type="ChEBI" id="CHEBI:18420"/>
    </ligand>
</feature>
<feature type="binding site" evidence="1">
    <location>
        <begin position="146"/>
        <end position="148"/>
    </location>
    <ligand>
        <name>CTP</name>
        <dbReference type="ChEBI" id="CHEBI:37563"/>
        <note>allosteric inhibitor</note>
    </ligand>
</feature>
<feature type="binding site" evidence="1">
    <location>
        <begin position="186"/>
        <end position="191"/>
    </location>
    <ligand>
        <name>CTP</name>
        <dbReference type="ChEBI" id="CHEBI:37563"/>
        <note>allosteric inhibitor</note>
    </ligand>
</feature>
<feature type="binding site" evidence="1">
    <location>
        <begin position="186"/>
        <end position="191"/>
    </location>
    <ligand>
        <name>UTP</name>
        <dbReference type="ChEBI" id="CHEBI:46398"/>
    </ligand>
</feature>
<feature type="binding site" evidence="1">
    <location>
        <position position="222"/>
    </location>
    <ligand>
        <name>CTP</name>
        <dbReference type="ChEBI" id="CHEBI:37563"/>
        <note>allosteric inhibitor</note>
    </ligand>
</feature>
<feature type="binding site" evidence="1">
    <location>
        <position position="222"/>
    </location>
    <ligand>
        <name>UTP</name>
        <dbReference type="ChEBI" id="CHEBI:46398"/>
    </ligand>
</feature>
<feature type="binding site" evidence="1">
    <location>
        <position position="353"/>
    </location>
    <ligand>
        <name>L-glutamine</name>
        <dbReference type="ChEBI" id="CHEBI:58359"/>
    </ligand>
</feature>
<feature type="binding site" evidence="1">
    <location>
        <begin position="381"/>
        <end position="384"/>
    </location>
    <ligand>
        <name>L-glutamine</name>
        <dbReference type="ChEBI" id="CHEBI:58359"/>
    </ligand>
</feature>
<feature type="binding site" evidence="1">
    <location>
        <position position="404"/>
    </location>
    <ligand>
        <name>L-glutamine</name>
        <dbReference type="ChEBI" id="CHEBI:58359"/>
    </ligand>
</feature>
<feature type="binding site" evidence="1">
    <location>
        <position position="471"/>
    </location>
    <ligand>
        <name>L-glutamine</name>
        <dbReference type="ChEBI" id="CHEBI:58359"/>
    </ligand>
</feature>
<proteinExistence type="inferred from homology"/>
<accession>B0U656</accession>
<dbReference type="EC" id="6.3.4.2" evidence="1"/>
<dbReference type="EMBL" id="CP000941">
    <property type="protein sequence ID" value="ACA11618.1"/>
    <property type="molecule type" value="Genomic_DNA"/>
</dbReference>
<dbReference type="RefSeq" id="WP_004084012.1">
    <property type="nucleotide sequence ID" value="NC_010513.1"/>
</dbReference>
<dbReference type="SMR" id="B0U656"/>
<dbReference type="MEROPS" id="C26.964"/>
<dbReference type="KEGG" id="xfm:Xfasm12_0614"/>
<dbReference type="HOGENOM" id="CLU_011675_5_0_6"/>
<dbReference type="UniPathway" id="UPA00159">
    <property type="reaction ID" value="UER00277"/>
</dbReference>
<dbReference type="GO" id="GO:0005829">
    <property type="term" value="C:cytosol"/>
    <property type="evidence" value="ECO:0007669"/>
    <property type="project" value="TreeGrafter"/>
</dbReference>
<dbReference type="GO" id="GO:0005524">
    <property type="term" value="F:ATP binding"/>
    <property type="evidence" value="ECO:0007669"/>
    <property type="project" value="UniProtKB-KW"/>
</dbReference>
<dbReference type="GO" id="GO:0003883">
    <property type="term" value="F:CTP synthase activity"/>
    <property type="evidence" value="ECO:0007669"/>
    <property type="project" value="UniProtKB-UniRule"/>
</dbReference>
<dbReference type="GO" id="GO:0004359">
    <property type="term" value="F:glutaminase activity"/>
    <property type="evidence" value="ECO:0007669"/>
    <property type="project" value="RHEA"/>
</dbReference>
<dbReference type="GO" id="GO:0042802">
    <property type="term" value="F:identical protein binding"/>
    <property type="evidence" value="ECO:0007669"/>
    <property type="project" value="TreeGrafter"/>
</dbReference>
<dbReference type="GO" id="GO:0046872">
    <property type="term" value="F:metal ion binding"/>
    <property type="evidence" value="ECO:0007669"/>
    <property type="project" value="UniProtKB-KW"/>
</dbReference>
<dbReference type="GO" id="GO:0044210">
    <property type="term" value="P:'de novo' CTP biosynthetic process"/>
    <property type="evidence" value="ECO:0007669"/>
    <property type="project" value="UniProtKB-UniRule"/>
</dbReference>
<dbReference type="GO" id="GO:0019856">
    <property type="term" value="P:pyrimidine nucleobase biosynthetic process"/>
    <property type="evidence" value="ECO:0007669"/>
    <property type="project" value="TreeGrafter"/>
</dbReference>
<dbReference type="CDD" id="cd03113">
    <property type="entry name" value="CTPS_N"/>
    <property type="match status" value="1"/>
</dbReference>
<dbReference type="CDD" id="cd01746">
    <property type="entry name" value="GATase1_CTP_Synthase"/>
    <property type="match status" value="1"/>
</dbReference>
<dbReference type="FunFam" id="3.40.50.300:FF:000009">
    <property type="entry name" value="CTP synthase"/>
    <property type="match status" value="1"/>
</dbReference>
<dbReference type="FunFam" id="3.40.50.880:FF:000002">
    <property type="entry name" value="CTP synthase"/>
    <property type="match status" value="1"/>
</dbReference>
<dbReference type="Gene3D" id="3.40.50.880">
    <property type="match status" value="1"/>
</dbReference>
<dbReference type="Gene3D" id="3.40.50.300">
    <property type="entry name" value="P-loop containing nucleotide triphosphate hydrolases"/>
    <property type="match status" value="1"/>
</dbReference>
<dbReference type="HAMAP" id="MF_01227">
    <property type="entry name" value="PyrG"/>
    <property type="match status" value="1"/>
</dbReference>
<dbReference type="InterPro" id="IPR029062">
    <property type="entry name" value="Class_I_gatase-like"/>
</dbReference>
<dbReference type="InterPro" id="IPR004468">
    <property type="entry name" value="CTP_synthase"/>
</dbReference>
<dbReference type="InterPro" id="IPR017456">
    <property type="entry name" value="CTP_synthase_N"/>
</dbReference>
<dbReference type="InterPro" id="IPR017926">
    <property type="entry name" value="GATASE"/>
</dbReference>
<dbReference type="InterPro" id="IPR033828">
    <property type="entry name" value="GATase1_CTP_Synthase"/>
</dbReference>
<dbReference type="InterPro" id="IPR027417">
    <property type="entry name" value="P-loop_NTPase"/>
</dbReference>
<dbReference type="NCBIfam" id="NF003792">
    <property type="entry name" value="PRK05380.1"/>
    <property type="match status" value="1"/>
</dbReference>
<dbReference type="NCBIfam" id="TIGR00337">
    <property type="entry name" value="PyrG"/>
    <property type="match status" value="1"/>
</dbReference>
<dbReference type="PANTHER" id="PTHR11550">
    <property type="entry name" value="CTP SYNTHASE"/>
    <property type="match status" value="1"/>
</dbReference>
<dbReference type="PANTHER" id="PTHR11550:SF0">
    <property type="entry name" value="CTP SYNTHASE-RELATED"/>
    <property type="match status" value="1"/>
</dbReference>
<dbReference type="Pfam" id="PF06418">
    <property type="entry name" value="CTP_synth_N"/>
    <property type="match status" value="1"/>
</dbReference>
<dbReference type="Pfam" id="PF00117">
    <property type="entry name" value="GATase"/>
    <property type="match status" value="1"/>
</dbReference>
<dbReference type="SUPFAM" id="SSF52317">
    <property type="entry name" value="Class I glutamine amidotransferase-like"/>
    <property type="match status" value="1"/>
</dbReference>
<dbReference type="SUPFAM" id="SSF52540">
    <property type="entry name" value="P-loop containing nucleoside triphosphate hydrolases"/>
    <property type="match status" value="1"/>
</dbReference>
<dbReference type="PROSITE" id="PS51273">
    <property type="entry name" value="GATASE_TYPE_1"/>
    <property type="match status" value="1"/>
</dbReference>
<keyword id="KW-0067">ATP-binding</keyword>
<keyword id="KW-0315">Glutamine amidotransferase</keyword>
<keyword id="KW-0436">Ligase</keyword>
<keyword id="KW-0460">Magnesium</keyword>
<keyword id="KW-0479">Metal-binding</keyword>
<keyword id="KW-0547">Nucleotide-binding</keyword>
<keyword id="KW-0665">Pyrimidine biosynthesis</keyword>